<keyword id="KW-0378">Hydrolase</keyword>
<keyword id="KW-0479">Metal-binding</keyword>
<keyword id="KW-0482">Metalloprotease</keyword>
<keyword id="KW-0645">Protease</keyword>
<keyword id="KW-1185">Reference proteome</keyword>
<keyword id="KW-0862">Zinc</keyword>
<feature type="chain" id="PRO_0000322655" description="Dictomallein">
    <location>
        <begin position="1"/>
        <end position="687"/>
    </location>
</feature>
<feature type="domain" description="Peptidase M66">
    <location>
        <begin position="233"/>
        <end position="501"/>
    </location>
</feature>
<feature type="region of interest" description="Disordered" evidence="2">
    <location>
        <begin position="1"/>
        <end position="45"/>
    </location>
</feature>
<feature type="region of interest" description="Disordered" evidence="2">
    <location>
        <begin position="73"/>
        <end position="112"/>
    </location>
</feature>
<feature type="active site" evidence="1">
    <location>
        <position position="394"/>
    </location>
</feature>
<feature type="binding site" evidence="1">
    <location>
        <position position="393"/>
    </location>
    <ligand>
        <name>Zn(2+)</name>
        <dbReference type="ChEBI" id="CHEBI:29105"/>
        <note>catalytic</note>
    </ligand>
</feature>
<feature type="binding site" evidence="1">
    <location>
        <position position="397"/>
    </location>
    <ligand>
        <name>Zn(2+)</name>
        <dbReference type="ChEBI" id="CHEBI:29105"/>
        <note>catalytic</note>
    </ligand>
</feature>
<feature type="binding site" evidence="1">
    <location>
        <position position="403"/>
    </location>
    <ligand>
        <name>Zn(2+)</name>
        <dbReference type="ChEBI" id="CHEBI:29105"/>
        <note>catalytic</note>
    </ligand>
</feature>
<comment type="cofactor">
    <cofactor evidence="3">
        <name>Zn(2+)</name>
        <dbReference type="ChEBI" id="CHEBI:29105"/>
    </cofactor>
    <text evidence="3">Binds 1 zinc ion per subunit.</text>
</comment>
<comment type="similarity">
    <text evidence="3">Belongs to the dictomallein family.</text>
</comment>
<comment type="sequence caution" evidence="3">
    <conflict type="erroneous initiation">
        <sequence resource="EMBL-CDS" id="CAH38727"/>
    </conflict>
</comment>
<reference key="1">
    <citation type="journal article" date="2004" name="Proc. Natl. Acad. Sci. U.S.A.">
        <title>Genomic plasticity of the causative agent of melioidosis, Burkholderia pseudomallei.</title>
        <authorList>
            <person name="Holden M.T.G."/>
            <person name="Titball R.W."/>
            <person name="Peacock S.J."/>
            <person name="Cerdeno-Tarraga A.-M."/>
            <person name="Atkins T."/>
            <person name="Crossman L.C."/>
            <person name="Pitt T."/>
            <person name="Churcher C."/>
            <person name="Mungall K.L."/>
            <person name="Bentley S.D."/>
            <person name="Sebaihia M."/>
            <person name="Thomson N.R."/>
            <person name="Bason N."/>
            <person name="Beacham I.R."/>
            <person name="Brooks K."/>
            <person name="Brown K.A."/>
            <person name="Brown N.F."/>
            <person name="Challis G.L."/>
            <person name="Cherevach I."/>
            <person name="Chillingworth T."/>
            <person name="Cronin A."/>
            <person name="Crossett B."/>
            <person name="Davis P."/>
            <person name="DeShazer D."/>
            <person name="Feltwell T."/>
            <person name="Fraser A."/>
            <person name="Hance Z."/>
            <person name="Hauser H."/>
            <person name="Holroyd S."/>
            <person name="Jagels K."/>
            <person name="Keith K.E."/>
            <person name="Maddison M."/>
            <person name="Moule S."/>
            <person name="Price C."/>
            <person name="Quail M.A."/>
            <person name="Rabbinowitsch E."/>
            <person name="Rutherford K."/>
            <person name="Sanders M."/>
            <person name="Simmonds M."/>
            <person name="Songsivilai S."/>
            <person name="Stevens K."/>
            <person name="Tumapa S."/>
            <person name="Vesaratchavest M."/>
            <person name="Whitehead S."/>
            <person name="Yeats C."/>
            <person name="Barrell B.G."/>
            <person name="Oyston P.C.F."/>
            <person name="Parkhill J."/>
        </authorList>
    </citation>
    <scope>NUCLEOTIDE SEQUENCE [LARGE SCALE GENOMIC DNA]</scope>
    <source>
        <strain>K96243</strain>
    </source>
</reference>
<sequence length="687" mass="71335">MGNGERPPARRPDSSGSPPPAADAPAASNHPFSSHDTKHMTSRRLASRTAVAASLSALMLAACGGDDSANAPTAGGAAPLTPAVASPAGPTGSTPGSTPGATTAPAPSSTSAGQLSVDKMAFAQTHVVPSGGLSWTLPNASASLRPISRRDALVLVAIGQADAVQPVLEAWKDGAKLGALALSPPSALPPTESGGRAYANDRWSAVVPAAWMVPGVSFSVSASNYTSSVAQAPVFGTDADVQLTILPFYLFGADDTNSPPLSTTQAPDAATQQEIFAKWPTAELKVRTHPAGRFSLATVVVGPRADRTGAAQPAYPVTALDQQKDGYGVMSAMLTLITNMRTANGDGPLNNQYYAPLIALNSNGQFANLGGGLGGVGSGAAVGDHRYTGIFIHEQGHAFGLNHAGDEYAKGAYPYAGGSLSGSVWGYDPNHREFLDVLVPTTASSYAKCASSHQLDAQGRCYKQDPMQGGAGDQSSGYKFATFSDYNTGRMQAWIASRVLADPASSTGYSKWDSAAQARAPYTPTTDNNGLYGVNQNLPVQAGVPVHTIVVSFSKAGSAGASYIYPPFSYTGNLIATFDPTSAADRQAITVDKGTYPWYCKGTGCDYTLRVTYADGSRTYRVLQGGFRAWWTPTVDDANATNPLSGSSFRVWAINVPGDKRIGKIELLDTPMVWNGMPANPTVLLSR</sequence>
<proteinExistence type="inferred from homology"/>
<accession>Q63KV4</accession>
<organism>
    <name type="scientific">Burkholderia pseudomallei (strain K96243)</name>
    <dbReference type="NCBI Taxonomy" id="272560"/>
    <lineage>
        <taxon>Bacteria</taxon>
        <taxon>Pseudomonadati</taxon>
        <taxon>Pseudomonadota</taxon>
        <taxon>Betaproteobacteria</taxon>
        <taxon>Burkholderiales</taxon>
        <taxon>Burkholderiaceae</taxon>
        <taxon>Burkholderia</taxon>
        <taxon>pseudomallei group</taxon>
    </lineage>
</organism>
<dbReference type="EC" id="3.4.24.-"/>
<dbReference type="EMBL" id="BX571966">
    <property type="protein sequence ID" value="CAH38727.1"/>
    <property type="status" value="ALT_INIT"/>
    <property type="molecule type" value="Genomic_DNA"/>
</dbReference>
<dbReference type="RefSeq" id="YP_111267.1">
    <property type="nucleotide sequence ID" value="NC_006351.1"/>
</dbReference>
<dbReference type="SMR" id="Q63KV4"/>
<dbReference type="KEGG" id="bps:BPSS1260"/>
<dbReference type="PATRIC" id="fig|272560.6.peg.5453"/>
<dbReference type="eggNOG" id="ENOG502Z8SD">
    <property type="taxonomic scope" value="Bacteria"/>
</dbReference>
<dbReference type="Proteomes" id="UP000000605">
    <property type="component" value="Chromosome 2"/>
</dbReference>
<dbReference type="GO" id="GO:0046872">
    <property type="term" value="F:metal ion binding"/>
    <property type="evidence" value="ECO:0007669"/>
    <property type="project" value="UniProtKB-KW"/>
</dbReference>
<dbReference type="GO" id="GO:0004222">
    <property type="term" value="F:metalloendopeptidase activity"/>
    <property type="evidence" value="ECO:0007669"/>
    <property type="project" value="InterPro"/>
</dbReference>
<dbReference type="GO" id="GO:0006508">
    <property type="term" value="P:proteolysis"/>
    <property type="evidence" value="ECO:0007669"/>
    <property type="project" value="UniProtKB-KW"/>
</dbReference>
<dbReference type="InterPro" id="IPR051256">
    <property type="entry name" value="Dictomallein"/>
</dbReference>
<dbReference type="InterPro" id="IPR019503">
    <property type="entry name" value="Peptidase_M66_dom"/>
</dbReference>
<dbReference type="PANTHER" id="PTHR39540">
    <property type="match status" value="1"/>
</dbReference>
<dbReference type="PANTHER" id="PTHR39540:SF1">
    <property type="entry name" value="DICTOMALLEIN-1-RELATED"/>
    <property type="match status" value="1"/>
</dbReference>
<dbReference type="Pfam" id="PF10462">
    <property type="entry name" value="Peptidase_M66"/>
    <property type="match status" value="1"/>
</dbReference>
<dbReference type="SUPFAM" id="SSF55486">
    <property type="entry name" value="Metalloproteases ('zincins'), catalytic domain"/>
    <property type="match status" value="1"/>
</dbReference>
<dbReference type="PROSITE" id="PS51694">
    <property type="entry name" value="PEPTIDASE_M66"/>
    <property type="match status" value="1"/>
</dbReference>
<gene>
    <name type="primary">dtmL</name>
    <name type="ordered locus">BPSS1260</name>
</gene>
<evidence type="ECO:0000250" key="1"/>
<evidence type="ECO:0000256" key="2">
    <source>
        <dbReference type="SAM" id="MobiDB-lite"/>
    </source>
</evidence>
<evidence type="ECO:0000305" key="3"/>
<protein>
    <recommendedName>
        <fullName>Dictomallein</fullName>
        <ecNumber>3.4.24.-</ecNumber>
    </recommendedName>
</protein>
<name>DTML_BURPS</name>